<organism>
    <name type="scientific">Arabidopsis thaliana</name>
    <name type="common">Mouse-ear cress</name>
    <dbReference type="NCBI Taxonomy" id="3702"/>
    <lineage>
        <taxon>Eukaryota</taxon>
        <taxon>Viridiplantae</taxon>
        <taxon>Streptophyta</taxon>
        <taxon>Embryophyta</taxon>
        <taxon>Tracheophyta</taxon>
        <taxon>Spermatophyta</taxon>
        <taxon>Magnoliopsida</taxon>
        <taxon>eudicotyledons</taxon>
        <taxon>Gunneridae</taxon>
        <taxon>Pentapetalae</taxon>
        <taxon>rosids</taxon>
        <taxon>malvids</taxon>
        <taxon>Brassicales</taxon>
        <taxon>Brassicaceae</taxon>
        <taxon>Camelineae</taxon>
        <taxon>Arabidopsis</taxon>
    </lineage>
</organism>
<comment type="function">
    <text>Putative serine protease.</text>
</comment>
<comment type="subcellular location">
    <subcellularLocation>
        <location evidence="4">Mitochondrion matrix</location>
    </subcellularLocation>
</comment>
<comment type="similarity">
    <text evidence="4">Belongs to the peptidase S1C family.</text>
</comment>
<comment type="sequence caution" evidence="4">
    <conflict type="erroneous gene model prediction">
        <sequence resource="EMBL-CDS" id="AAB60923"/>
    </conflict>
</comment>
<feature type="transit peptide" description="Mitochondrion" evidence="2">
    <location>
        <begin position="1"/>
        <end position="48"/>
    </location>
</feature>
<feature type="chain" id="PRO_0000045831" description="Putative protease Do-like 3, mitochondrial">
    <location>
        <begin position="49"/>
        <end position="559"/>
    </location>
</feature>
<feature type="domain" description="PDZ">
    <location>
        <begin position="300"/>
        <end position="380"/>
    </location>
</feature>
<feature type="region of interest" description="Disordered" evidence="3">
    <location>
        <begin position="59"/>
        <end position="81"/>
    </location>
</feature>
<feature type="region of interest" description="Serine protease">
    <location>
        <begin position="100"/>
        <end position="292"/>
    </location>
</feature>
<feature type="region of interest" description="Disordered" evidence="3">
    <location>
        <begin position="538"/>
        <end position="559"/>
    </location>
</feature>
<feature type="compositionally biased region" description="Basic residues" evidence="3">
    <location>
        <begin position="546"/>
        <end position="559"/>
    </location>
</feature>
<feature type="active site" description="Charge relay system" evidence="1">
    <location>
        <position position="138"/>
    </location>
</feature>
<feature type="active site" description="Charge relay system" evidence="1">
    <location>
        <position position="169"/>
    </location>
</feature>
<feature type="active site" description="Charge relay system" evidence="1">
    <location>
        <position position="247"/>
    </location>
</feature>
<protein>
    <recommendedName>
        <fullName>Putative protease Do-like 3, mitochondrial</fullName>
        <ecNumber>3.4.21.-</ecNumber>
    </recommendedName>
</protein>
<name>DEGP3_ARATH</name>
<accession>Q9SHZ1</accession>
<accession>O04480</accession>
<proteinExistence type="inferred from homology"/>
<keyword id="KW-0378">Hydrolase</keyword>
<keyword id="KW-0496">Mitochondrion</keyword>
<keyword id="KW-0645">Protease</keyword>
<keyword id="KW-1185">Reference proteome</keyword>
<keyword id="KW-0720">Serine protease</keyword>
<keyword id="KW-0809">Transit peptide</keyword>
<reference key="1">
    <citation type="journal article" date="2000" name="Nature">
        <title>Sequence and analysis of chromosome 1 of the plant Arabidopsis thaliana.</title>
        <authorList>
            <person name="Theologis A."/>
            <person name="Ecker J.R."/>
            <person name="Palm C.J."/>
            <person name="Federspiel N.A."/>
            <person name="Kaul S."/>
            <person name="White O."/>
            <person name="Alonso J."/>
            <person name="Altafi H."/>
            <person name="Araujo R."/>
            <person name="Bowman C.L."/>
            <person name="Brooks S.Y."/>
            <person name="Buehler E."/>
            <person name="Chan A."/>
            <person name="Chao Q."/>
            <person name="Chen H."/>
            <person name="Cheuk R.F."/>
            <person name="Chin C.W."/>
            <person name="Chung M.K."/>
            <person name="Conn L."/>
            <person name="Conway A.B."/>
            <person name="Conway A.R."/>
            <person name="Creasy T.H."/>
            <person name="Dewar K."/>
            <person name="Dunn P."/>
            <person name="Etgu P."/>
            <person name="Feldblyum T.V."/>
            <person name="Feng J.-D."/>
            <person name="Fong B."/>
            <person name="Fujii C.Y."/>
            <person name="Gill J.E."/>
            <person name="Goldsmith A.D."/>
            <person name="Haas B."/>
            <person name="Hansen N.F."/>
            <person name="Hughes B."/>
            <person name="Huizar L."/>
            <person name="Hunter J.L."/>
            <person name="Jenkins J."/>
            <person name="Johnson-Hopson C."/>
            <person name="Khan S."/>
            <person name="Khaykin E."/>
            <person name="Kim C.J."/>
            <person name="Koo H.L."/>
            <person name="Kremenetskaia I."/>
            <person name="Kurtz D.B."/>
            <person name="Kwan A."/>
            <person name="Lam B."/>
            <person name="Langin-Hooper S."/>
            <person name="Lee A."/>
            <person name="Lee J.M."/>
            <person name="Lenz C.A."/>
            <person name="Li J.H."/>
            <person name="Li Y.-P."/>
            <person name="Lin X."/>
            <person name="Liu S.X."/>
            <person name="Liu Z.A."/>
            <person name="Luros J.S."/>
            <person name="Maiti R."/>
            <person name="Marziali A."/>
            <person name="Militscher J."/>
            <person name="Miranda M."/>
            <person name="Nguyen M."/>
            <person name="Nierman W.C."/>
            <person name="Osborne B.I."/>
            <person name="Pai G."/>
            <person name="Peterson J."/>
            <person name="Pham P.K."/>
            <person name="Rizzo M."/>
            <person name="Rooney T."/>
            <person name="Rowley D."/>
            <person name="Sakano H."/>
            <person name="Salzberg S.L."/>
            <person name="Schwartz J.R."/>
            <person name="Shinn P."/>
            <person name="Southwick A.M."/>
            <person name="Sun H."/>
            <person name="Tallon L.J."/>
            <person name="Tambunga G."/>
            <person name="Toriumi M.J."/>
            <person name="Town C.D."/>
            <person name="Utterback T."/>
            <person name="Van Aken S."/>
            <person name="Vaysberg M."/>
            <person name="Vysotskaia V.S."/>
            <person name="Walker M."/>
            <person name="Wu D."/>
            <person name="Yu G."/>
            <person name="Fraser C.M."/>
            <person name="Venter J.C."/>
            <person name="Davis R.W."/>
        </authorList>
    </citation>
    <scope>NUCLEOTIDE SEQUENCE [LARGE SCALE GENOMIC DNA]</scope>
    <source>
        <strain>cv. Columbia</strain>
    </source>
</reference>
<reference key="2">
    <citation type="journal article" date="2017" name="Plant J.">
        <title>Araport11: a complete reannotation of the Arabidopsis thaliana reference genome.</title>
        <authorList>
            <person name="Cheng C.Y."/>
            <person name="Krishnakumar V."/>
            <person name="Chan A.P."/>
            <person name="Thibaud-Nissen F."/>
            <person name="Schobel S."/>
            <person name="Town C.D."/>
        </authorList>
    </citation>
    <scope>GENOME REANNOTATION</scope>
    <source>
        <strain>cv. Columbia</strain>
    </source>
</reference>
<reference key="3">
    <citation type="journal article" date="2001" name="Plant Physiol.">
        <title>Chloroplast and mitochondrial proteases in Arabidopsis. A proposed nomenclature.</title>
        <authorList>
            <person name="Adam Z."/>
            <person name="Adamska I."/>
            <person name="Nakabayashi K."/>
            <person name="Ostersetzer O."/>
            <person name="Haussuhl K."/>
            <person name="Manuell A."/>
            <person name="Zheng B."/>
            <person name="Vallon O."/>
            <person name="Rodermel S.R."/>
            <person name="Shinozaki K."/>
            <person name="Clarke A.K."/>
        </authorList>
    </citation>
    <scope>GENE FAMILY</scope>
    <scope>NOMENCLATURE</scope>
</reference>
<evidence type="ECO:0000250" key="1"/>
<evidence type="ECO:0000255" key="2"/>
<evidence type="ECO:0000256" key="3">
    <source>
        <dbReference type="SAM" id="MobiDB-lite"/>
    </source>
</evidence>
<evidence type="ECO:0000305" key="4"/>
<gene>
    <name type="primary">DEGP3</name>
    <name type="ordered locus">At1g65630</name>
    <name type="ORF">F1E22.1</name>
    <name type="ORF">F5I14.16</name>
</gene>
<sequence length="559" mass="61712">MSFLCVRTVSRFRSLSRALAPGFLLLHGNAVPKTAVFFRQQSSNTRLFSSYTAPSGVEENNSKSALKNKLPPGKEVSSKDAKEKITTSAIDLALNSVVKVFTVSSKPRLFQPWQITMQSESTGSGFVISGKKILTNAHVVANQTSVKVRKHGSTTKYKAKVQAVGHECDLAILEIDNDKFWEGMNPLELGDIPSMQDTVYVVGYPKGGDTISVSKGVVSRVGPIKYSHSGTELLAIQIDAAINNGNSGGPVIMGNKVAGVAFESLCYSDSIGYIIPTPVIRHFLNAIEESGEDVSFGSINLTYQKMDNDQLRKDFKMSDKMTGILINKINPLSDVHKVLKKDDIILAIDGVPIGNDSSVHFRKKERITFKHLVSMKKPCETALLKVLREGKEYEFNSSLKSVPPLVPKRQYDKSASYYIFGGLVFLPLTKPYIDSSCVSESALGKMPKKAGEQVVIISQILEDDINTGYSIFEDFQVKKVNGVQVHNLKHLYKLVEECCTETVRMDLEKDKVITLDYKSAKKVTSKILKSLKIPSAVSEDLQPKQQNKRSKVPPKSKEH</sequence>
<dbReference type="EC" id="3.4.21.-"/>
<dbReference type="EMBL" id="AC001229">
    <property type="protein sequence ID" value="AAB60923.1"/>
    <property type="status" value="ALT_SEQ"/>
    <property type="molecule type" value="Genomic_DNA"/>
</dbReference>
<dbReference type="EMBL" id="AC007234">
    <property type="protein sequence ID" value="AAF23847.1"/>
    <property type="molecule type" value="Genomic_DNA"/>
</dbReference>
<dbReference type="EMBL" id="CP002684">
    <property type="protein sequence ID" value="AEE34405.1"/>
    <property type="molecule type" value="Genomic_DNA"/>
</dbReference>
<dbReference type="RefSeq" id="NP_564856.1">
    <property type="nucleotide sequence ID" value="NM_105236.2"/>
</dbReference>
<dbReference type="SMR" id="Q9SHZ1"/>
<dbReference type="STRING" id="3702.Q9SHZ1"/>
<dbReference type="MEROPS" id="S01.A07"/>
<dbReference type="GlyGen" id="Q9SHZ1">
    <property type="glycosylation" value="1 site"/>
</dbReference>
<dbReference type="PaxDb" id="3702-AT1G65630.1"/>
<dbReference type="EnsemblPlants" id="AT1G65630.1">
    <property type="protein sequence ID" value="AT1G65630.1"/>
    <property type="gene ID" value="AT1G65630"/>
</dbReference>
<dbReference type="GeneID" id="842874"/>
<dbReference type="Gramene" id="AT1G65630.1">
    <property type="protein sequence ID" value="AT1G65630.1"/>
    <property type="gene ID" value="AT1G65630"/>
</dbReference>
<dbReference type="KEGG" id="ath:AT1G65630"/>
<dbReference type="Araport" id="AT1G65630"/>
<dbReference type="TAIR" id="AT1G65630">
    <property type="gene designation" value="DEG3"/>
</dbReference>
<dbReference type="eggNOG" id="KOG1320">
    <property type="taxonomic scope" value="Eukaryota"/>
</dbReference>
<dbReference type="HOGENOM" id="CLU_020120_10_0_1"/>
<dbReference type="InParanoid" id="Q9SHZ1"/>
<dbReference type="OMA" id="RITFKHL"/>
<dbReference type="PhylomeDB" id="Q9SHZ1"/>
<dbReference type="PRO" id="PR:Q9SHZ1"/>
<dbReference type="Proteomes" id="UP000006548">
    <property type="component" value="Chromosome 1"/>
</dbReference>
<dbReference type="ExpressionAtlas" id="Q9SHZ1">
    <property type="expression patterns" value="baseline and differential"/>
</dbReference>
<dbReference type="GO" id="GO:0005759">
    <property type="term" value="C:mitochondrial matrix"/>
    <property type="evidence" value="ECO:0007669"/>
    <property type="project" value="UniProtKB-SubCell"/>
</dbReference>
<dbReference type="GO" id="GO:0004252">
    <property type="term" value="F:serine-type endopeptidase activity"/>
    <property type="evidence" value="ECO:0007669"/>
    <property type="project" value="InterPro"/>
</dbReference>
<dbReference type="GO" id="GO:0006508">
    <property type="term" value="P:proteolysis"/>
    <property type="evidence" value="ECO:0007669"/>
    <property type="project" value="UniProtKB-KW"/>
</dbReference>
<dbReference type="Gene3D" id="2.30.42.10">
    <property type="match status" value="1"/>
</dbReference>
<dbReference type="Gene3D" id="3.20.190.20">
    <property type="match status" value="1"/>
</dbReference>
<dbReference type="Gene3D" id="2.40.10.10">
    <property type="entry name" value="Trypsin-like serine proteases"/>
    <property type="match status" value="2"/>
</dbReference>
<dbReference type="InterPro" id="IPR041517">
    <property type="entry name" value="DEGP_PDZ"/>
</dbReference>
<dbReference type="InterPro" id="IPR046449">
    <property type="entry name" value="DEGP_PDZ_sf"/>
</dbReference>
<dbReference type="InterPro" id="IPR036034">
    <property type="entry name" value="PDZ_sf"/>
</dbReference>
<dbReference type="InterPro" id="IPR009003">
    <property type="entry name" value="Peptidase_S1_PA"/>
</dbReference>
<dbReference type="InterPro" id="IPR043504">
    <property type="entry name" value="Peptidase_S1_PA_chymotrypsin"/>
</dbReference>
<dbReference type="InterPro" id="IPR001940">
    <property type="entry name" value="Peptidase_S1C"/>
</dbReference>
<dbReference type="PANTHER" id="PTHR45980">
    <property type="match status" value="1"/>
</dbReference>
<dbReference type="PANTHER" id="PTHR45980:SF10">
    <property type="entry name" value="PROTEASE DO-LIKE 3, MITOCHONDRIAL-RELATED"/>
    <property type="match status" value="1"/>
</dbReference>
<dbReference type="Pfam" id="PF17815">
    <property type="entry name" value="PDZ_3"/>
    <property type="match status" value="1"/>
</dbReference>
<dbReference type="Pfam" id="PF13365">
    <property type="entry name" value="Trypsin_2"/>
    <property type="match status" value="1"/>
</dbReference>
<dbReference type="PRINTS" id="PR00834">
    <property type="entry name" value="PROTEASES2C"/>
</dbReference>
<dbReference type="SUPFAM" id="SSF50156">
    <property type="entry name" value="PDZ domain-like"/>
    <property type="match status" value="1"/>
</dbReference>
<dbReference type="SUPFAM" id="SSF50494">
    <property type="entry name" value="Trypsin-like serine proteases"/>
    <property type="match status" value="1"/>
</dbReference>